<gene>
    <name type="primary">Rnase13</name>
</gene>
<reference key="1">
    <citation type="journal article" date="2005" name="Genomics">
        <title>The ribonuclease A superfamily of mammals and birds: identifying new members and tracing evolutionary histories.</title>
        <authorList>
            <person name="Cho S."/>
            <person name="Beintema J.J."/>
            <person name="Zhang J."/>
        </authorList>
    </citation>
    <scope>NUCLEOTIDE SEQUENCE [GENOMIC DNA]</scope>
    <source>
        <strain>C57BL/6J</strain>
    </source>
</reference>
<reference key="2">
    <citation type="journal article" date="2004" name="Genome Res.">
        <title>The status, quality, and expansion of the NIH full-length cDNA project: the Mammalian Gene Collection (MGC).</title>
        <authorList>
            <consortium name="The MGC Project Team"/>
        </authorList>
    </citation>
    <scope>NUCLEOTIDE SEQUENCE [LARGE SCALE MRNA]</scope>
    <source>
        <tissue>Brain</tissue>
    </source>
</reference>
<accession>Q5GAM7</accession>
<organism>
    <name type="scientific">Mus musculus</name>
    <name type="common">Mouse</name>
    <dbReference type="NCBI Taxonomy" id="10090"/>
    <lineage>
        <taxon>Eukaryota</taxon>
        <taxon>Metazoa</taxon>
        <taxon>Chordata</taxon>
        <taxon>Craniata</taxon>
        <taxon>Vertebrata</taxon>
        <taxon>Euteleostomi</taxon>
        <taxon>Mammalia</taxon>
        <taxon>Eutheria</taxon>
        <taxon>Euarchontoglires</taxon>
        <taxon>Glires</taxon>
        <taxon>Rodentia</taxon>
        <taxon>Myomorpha</taxon>
        <taxon>Muroidea</taxon>
        <taxon>Muridae</taxon>
        <taxon>Murinae</taxon>
        <taxon>Mus</taxon>
        <taxon>Mus</taxon>
    </lineage>
</organism>
<proteinExistence type="evidence at transcript level"/>
<sequence>MAPDVAWLLVLPLVFRPTLVTGITIQTAIKNFRTLHVDYPMVNYPKGFHGYCNGLMAYVRGKLQDWYCPKIHYVVHAPLEDIQKFCKYSESFCENYNEYCTLTQNSFPVTICTLVHQQAPTSCSYNSTLTNQRLYLLCSRKHDAEPIGIIGLY</sequence>
<protein>
    <recommendedName>
        <fullName>Probable inactive ribonuclease-like protein 13</fullName>
    </recommendedName>
</protein>
<comment type="function">
    <text evidence="2">Does not exhibit any ribonuclease activity.</text>
</comment>
<comment type="subcellular location">
    <subcellularLocation>
        <location evidence="2">Secreted</location>
    </subcellularLocation>
</comment>
<comment type="similarity">
    <text evidence="2">Belongs to the pancreatic ribonuclease family.</text>
</comment>
<evidence type="ECO:0000255" key="1"/>
<evidence type="ECO:0000305" key="2"/>
<keyword id="KW-1185">Reference proteome</keyword>
<keyword id="KW-0964">Secreted</keyword>
<keyword id="KW-0732">Signal</keyword>
<feature type="signal peptide" evidence="1">
    <location>
        <begin position="1"/>
        <end position="22"/>
    </location>
</feature>
<feature type="chain" id="PRO_0000308706" description="Probable inactive ribonuclease-like protein 13">
    <location>
        <begin position="23"/>
        <end position="153"/>
    </location>
</feature>
<dbReference type="EMBL" id="AY665825">
    <property type="protein sequence ID" value="AAV87192.1"/>
    <property type="molecule type" value="Genomic_DNA"/>
</dbReference>
<dbReference type="EMBL" id="BC132614">
    <property type="protein sequence ID" value="AAI32615.1"/>
    <property type="molecule type" value="mRNA"/>
</dbReference>
<dbReference type="EMBL" id="BC132616">
    <property type="protein sequence ID" value="AAI32617.1"/>
    <property type="molecule type" value="mRNA"/>
</dbReference>
<dbReference type="CCDS" id="CCDS27048.1"/>
<dbReference type="RefSeq" id="NP_001011687.1">
    <property type="nucleotide sequence ID" value="NM_001011687.3"/>
</dbReference>
<dbReference type="RefSeq" id="XP_006519281.1">
    <property type="nucleotide sequence ID" value="XM_006519218.1"/>
</dbReference>
<dbReference type="RefSeq" id="XP_006519282.1">
    <property type="nucleotide sequence ID" value="XM_006519219.1"/>
</dbReference>
<dbReference type="RefSeq" id="XP_017171565.1">
    <property type="nucleotide sequence ID" value="XM_017316076.2"/>
</dbReference>
<dbReference type="SMR" id="Q5GAM7"/>
<dbReference type="FunCoup" id="Q5GAM7">
    <property type="interactions" value="1"/>
</dbReference>
<dbReference type="STRING" id="10090.ENSMUSP00000087203"/>
<dbReference type="PhosphoSitePlus" id="Q5GAM7"/>
<dbReference type="PaxDb" id="10090-ENSMUSP00000087203"/>
<dbReference type="ProteomicsDB" id="260826"/>
<dbReference type="Antibodypedia" id="47225">
    <property type="antibodies" value="97 antibodies from 17 providers"/>
</dbReference>
<dbReference type="DNASU" id="497071"/>
<dbReference type="Ensembl" id="ENSMUST00000089771.4">
    <property type="protein sequence ID" value="ENSMUSP00000087203.3"/>
    <property type="gene ID" value="ENSMUSG00000068392.4"/>
</dbReference>
<dbReference type="GeneID" id="497071"/>
<dbReference type="KEGG" id="mmu:497071"/>
<dbReference type="UCSC" id="uc007tnn.2">
    <property type="organism name" value="mouse"/>
</dbReference>
<dbReference type="AGR" id="MGI:3528592"/>
<dbReference type="CTD" id="440163"/>
<dbReference type="MGI" id="MGI:3528592">
    <property type="gene designation" value="Rnase13"/>
</dbReference>
<dbReference type="VEuPathDB" id="HostDB:ENSMUSG00000068392"/>
<dbReference type="eggNOG" id="ENOG502SRBA">
    <property type="taxonomic scope" value="Eukaryota"/>
</dbReference>
<dbReference type="GeneTree" id="ENSGT00390000015830"/>
<dbReference type="HOGENOM" id="CLU_1685971_0_0_1"/>
<dbReference type="InParanoid" id="Q5GAM7"/>
<dbReference type="OMA" id="KQPPTSC"/>
<dbReference type="OrthoDB" id="9445850at2759"/>
<dbReference type="PhylomeDB" id="Q5GAM7"/>
<dbReference type="TreeFam" id="TF343810"/>
<dbReference type="BioGRID-ORCS" id="497071">
    <property type="hits" value="4 hits in 77 CRISPR screens"/>
</dbReference>
<dbReference type="PRO" id="PR:Q5GAM7"/>
<dbReference type="Proteomes" id="UP000000589">
    <property type="component" value="Chromosome 14"/>
</dbReference>
<dbReference type="RNAct" id="Q5GAM7">
    <property type="molecule type" value="protein"/>
</dbReference>
<dbReference type="Bgee" id="ENSMUSG00000068392">
    <property type="expression patterns" value="Expressed in hindlimb stylopod muscle and 6 other cell types or tissues"/>
</dbReference>
<dbReference type="GO" id="GO:0005576">
    <property type="term" value="C:extracellular region"/>
    <property type="evidence" value="ECO:0007669"/>
    <property type="project" value="UniProtKB-SubCell"/>
</dbReference>
<dbReference type="GO" id="GO:0003676">
    <property type="term" value="F:nucleic acid binding"/>
    <property type="evidence" value="ECO:0007669"/>
    <property type="project" value="InterPro"/>
</dbReference>
<dbReference type="CDD" id="cd00163">
    <property type="entry name" value="RNase_A"/>
    <property type="match status" value="1"/>
</dbReference>
<dbReference type="Gene3D" id="3.10.130.10">
    <property type="entry name" value="Ribonuclease A-like domain"/>
    <property type="match status" value="1"/>
</dbReference>
<dbReference type="InterPro" id="IPR001427">
    <property type="entry name" value="RNaseA"/>
</dbReference>
<dbReference type="InterPro" id="IPR036816">
    <property type="entry name" value="RNaseA-like_dom_sf"/>
</dbReference>
<dbReference type="InterPro" id="IPR023412">
    <property type="entry name" value="RNaseA_domain"/>
</dbReference>
<dbReference type="PANTHER" id="PTHR11437:SF11">
    <property type="entry name" value="INACTIVE RIBONUCLEASE-LIKE PROTEIN 13-RELATED"/>
    <property type="match status" value="1"/>
</dbReference>
<dbReference type="PANTHER" id="PTHR11437">
    <property type="entry name" value="RIBONUCLEASE"/>
    <property type="match status" value="1"/>
</dbReference>
<dbReference type="Pfam" id="PF00074">
    <property type="entry name" value="RnaseA"/>
    <property type="match status" value="1"/>
</dbReference>
<dbReference type="SMART" id="SM00092">
    <property type="entry name" value="RNAse_Pc"/>
    <property type="match status" value="1"/>
</dbReference>
<dbReference type="SUPFAM" id="SSF54076">
    <property type="entry name" value="RNase A-like"/>
    <property type="match status" value="1"/>
</dbReference>
<name>RNS13_MOUSE</name>